<organism>
    <name type="scientific">Photobacterium profundum (strain SS9)</name>
    <dbReference type="NCBI Taxonomy" id="298386"/>
    <lineage>
        <taxon>Bacteria</taxon>
        <taxon>Pseudomonadati</taxon>
        <taxon>Pseudomonadota</taxon>
        <taxon>Gammaproteobacteria</taxon>
        <taxon>Vibrionales</taxon>
        <taxon>Vibrionaceae</taxon>
        <taxon>Photobacterium</taxon>
    </lineage>
</organism>
<proteinExistence type="inferred from homology"/>
<dbReference type="EC" id="2.1.1.-" evidence="1"/>
<dbReference type="EMBL" id="CR378674">
    <property type="protein sequence ID" value="CAG21693.1"/>
    <property type="status" value="ALT_INIT"/>
    <property type="molecule type" value="Genomic_DNA"/>
</dbReference>
<dbReference type="RefSeq" id="WP_011219937.1">
    <property type="nucleotide sequence ID" value="NC_006370.1"/>
</dbReference>
<dbReference type="SMR" id="Q6LLY5"/>
<dbReference type="STRING" id="298386.PBPRA3409"/>
<dbReference type="KEGG" id="ppr:PBPRA3409"/>
<dbReference type="eggNOG" id="COG2264">
    <property type="taxonomic scope" value="Bacteria"/>
</dbReference>
<dbReference type="HOGENOM" id="CLU_049382_4_1_6"/>
<dbReference type="Proteomes" id="UP000000593">
    <property type="component" value="Chromosome 1"/>
</dbReference>
<dbReference type="GO" id="GO:0005829">
    <property type="term" value="C:cytosol"/>
    <property type="evidence" value="ECO:0007669"/>
    <property type="project" value="TreeGrafter"/>
</dbReference>
<dbReference type="GO" id="GO:0016279">
    <property type="term" value="F:protein-lysine N-methyltransferase activity"/>
    <property type="evidence" value="ECO:0007669"/>
    <property type="project" value="TreeGrafter"/>
</dbReference>
<dbReference type="GO" id="GO:0032259">
    <property type="term" value="P:methylation"/>
    <property type="evidence" value="ECO:0007669"/>
    <property type="project" value="UniProtKB-KW"/>
</dbReference>
<dbReference type="CDD" id="cd02440">
    <property type="entry name" value="AdoMet_MTases"/>
    <property type="match status" value="1"/>
</dbReference>
<dbReference type="Gene3D" id="3.40.50.150">
    <property type="entry name" value="Vaccinia Virus protein VP39"/>
    <property type="match status" value="1"/>
</dbReference>
<dbReference type="HAMAP" id="MF_00735">
    <property type="entry name" value="Methyltr_PrmA"/>
    <property type="match status" value="1"/>
</dbReference>
<dbReference type="InterPro" id="IPR050078">
    <property type="entry name" value="Ribosomal_L11_MeTrfase_PrmA"/>
</dbReference>
<dbReference type="InterPro" id="IPR004498">
    <property type="entry name" value="Ribosomal_PrmA_MeTrfase"/>
</dbReference>
<dbReference type="InterPro" id="IPR029063">
    <property type="entry name" value="SAM-dependent_MTases_sf"/>
</dbReference>
<dbReference type="NCBIfam" id="TIGR00406">
    <property type="entry name" value="prmA"/>
    <property type="match status" value="1"/>
</dbReference>
<dbReference type="PANTHER" id="PTHR43648">
    <property type="entry name" value="ELECTRON TRANSFER FLAVOPROTEIN BETA SUBUNIT LYSINE METHYLTRANSFERASE"/>
    <property type="match status" value="1"/>
</dbReference>
<dbReference type="PANTHER" id="PTHR43648:SF1">
    <property type="entry name" value="ELECTRON TRANSFER FLAVOPROTEIN BETA SUBUNIT LYSINE METHYLTRANSFERASE"/>
    <property type="match status" value="1"/>
</dbReference>
<dbReference type="Pfam" id="PF06325">
    <property type="entry name" value="PrmA"/>
    <property type="match status" value="1"/>
</dbReference>
<dbReference type="PIRSF" id="PIRSF000401">
    <property type="entry name" value="RPL11_MTase"/>
    <property type="match status" value="1"/>
</dbReference>
<dbReference type="SUPFAM" id="SSF53335">
    <property type="entry name" value="S-adenosyl-L-methionine-dependent methyltransferases"/>
    <property type="match status" value="1"/>
</dbReference>
<sequence length="294" mass="32246">MPWIQIKLNATAENAEAIGDMLMEETGALSATFLDAQDTPVFEPMPGETRLWGDTDVIGLYDAEADMDFVLNMLKNSPLIAEDFAYKIEQLEDKDWEREWMVNFHPMRFGRRLWICPSWREAPEPNAVNVLLDPGLAFGTGTHPTTSLCLEWLDGQDLVGKTIIDFGCGSGILAIAALKLGAEKVIGIDIDPQAIQASRDNAERNGVSDKLALFLPQDQPTDVQADVVVANILAGPLRELSPVIKSLVKPGGKLAISGVLEIQAEDVSTYYSDELALDPVVARDEWCRISGYKA</sequence>
<reference key="1">
    <citation type="journal article" date="2005" name="Science">
        <title>Life at depth: Photobacterium profundum genome sequence and expression analysis.</title>
        <authorList>
            <person name="Vezzi A."/>
            <person name="Campanaro S."/>
            <person name="D'Angelo M."/>
            <person name="Simonato F."/>
            <person name="Vitulo N."/>
            <person name="Lauro F.M."/>
            <person name="Cestaro A."/>
            <person name="Malacrida G."/>
            <person name="Simionati B."/>
            <person name="Cannata N."/>
            <person name="Romualdi C."/>
            <person name="Bartlett D.H."/>
            <person name="Valle G."/>
        </authorList>
    </citation>
    <scope>NUCLEOTIDE SEQUENCE [LARGE SCALE GENOMIC DNA]</scope>
    <source>
        <strain>ATCC BAA-1253 / SS9</strain>
    </source>
</reference>
<comment type="function">
    <text evidence="1">Methylates ribosomal protein L11.</text>
</comment>
<comment type="catalytic activity">
    <reaction evidence="1">
        <text>L-lysyl-[protein] + 3 S-adenosyl-L-methionine = N(6),N(6),N(6)-trimethyl-L-lysyl-[protein] + 3 S-adenosyl-L-homocysteine + 3 H(+)</text>
        <dbReference type="Rhea" id="RHEA:54192"/>
        <dbReference type="Rhea" id="RHEA-COMP:9752"/>
        <dbReference type="Rhea" id="RHEA-COMP:13826"/>
        <dbReference type="ChEBI" id="CHEBI:15378"/>
        <dbReference type="ChEBI" id="CHEBI:29969"/>
        <dbReference type="ChEBI" id="CHEBI:57856"/>
        <dbReference type="ChEBI" id="CHEBI:59789"/>
        <dbReference type="ChEBI" id="CHEBI:61961"/>
    </reaction>
</comment>
<comment type="subcellular location">
    <subcellularLocation>
        <location evidence="1">Cytoplasm</location>
    </subcellularLocation>
</comment>
<comment type="similarity">
    <text evidence="1">Belongs to the methyltransferase superfamily. PrmA family.</text>
</comment>
<comment type="sequence caution" evidence="2">
    <conflict type="erroneous initiation">
        <sequence resource="EMBL-CDS" id="CAG21693"/>
    </conflict>
</comment>
<protein>
    <recommendedName>
        <fullName evidence="1">Ribosomal protein L11 methyltransferase</fullName>
        <shortName evidence="1">L11 Mtase</shortName>
        <ecNumber evidence="1">2.1.1.-</ecNumber>
    </recommendedName>
</protein>
<keyword id="KW-0963">Cytoplasm</keyword>
<keyword id="KW-0489">Methyltransferase</keyword>
<keyword id="KW-1185">Reference proteome</keyword>
<keyword id="KW-0949">S-adenosyl-L-methionine</keyword>
<keyword id="KW-0808">Transferase</keyword>
<feature type="chain" id="PRO_0000192287" description="Ribosomal protein L11 methyltransferase">
    <location>
        <begin position="1"/>
        <end position="294"/>
    </location>
</feature>
<feature type="binding site" evidence="1">
    <location>
        <position position="146"/>
    </location>
    <ligand>
        <name>S-adenosyl-L-methionine</name>
        <dbReference type="ChEBI" id="CHEBI:59789"/>
    </ligand>
</feature>
<feature type="binding site" evidence="1">
    <location>
        <position position="167"/>
    </location>
    <ligand>
        <name>S-adenosyl-L-methionine</name>
        <dbReference type="ChEBI" id="CHEBI:59789"/>
    </ligand>
</feature>
<feature type="binding site" evidence="1">
    <location>
        <position position="189"/>
    </location>
    <ligand>
        <name>S-adenosyl-L-methionine</name>
        <dbReference type="ChEBI" id="CHEBI:59789"/>
    </ligand>
</feature>
<feature type="binding site" evidence="1">
    <location>
        <position position="231"/>
    </location>
    <ligand>
        <name>S-adenosyl-L-methionine</name>
        <dbReference type="ChEBI" id="CHEBI:59789"/>
    </ligand>
</feature>
<gene>
    <name evidence="1" type="primary">prmA</name>
    <name type="ordered locus">PBPRA3409</name>
</gene>
<evidence type="ECO:0000255" key="1">
    <source>
        <dbReference type="HAMAP-Rule" id="MF_00735"/>
    </source>
</evidence>
<evidence type="ECO:0000305" key="2"/>
<name>PRMA_PHOPR</name>
<accession>Q6LLY5</accession>